<name>RL34_HAEIN</name>
<keyword id="KW-1185">Reference proteome</keyword>
<keyword id="KW-0687">Ribonucleoprotein</keyword>
<keyword id="KW-0689">Ribosomal protein</keyword>
<dbReference type="EMBL" id="L42023">
    <property type="protein sequence ID" value="AAC22660.1"/>
    <property type="molecule type" value="Genomic_DNA"/>
</dbReference>
<dbReference type="PIR" id="E64107">
    <property type="entry name" value="E64107"/>
</dbReference>
<dbReference type="RefSeq" id="NP_439160.1">
    <property type="nucleotide sequence ID" value="NC_000907.1"/>
</dbReference>
<dbReference type="SMR" id="P66244"/>
<dbReference type="STRING" id="71421.HI_0998"/>
<dbReference type="EnsemblBacteria" id="AAC22660">
    <property type="protein sequence ID" value="AAC22660"/>
    <property type="gene ID" value="HI_0998"/>
</dbReference>
<dbReference type="KEGG" id="hin:HI_0998"/>
<dbReference type="PATRIC" id="fig|71421.8.peg.1041"/>
<dbReference type="eggNOG" id="COG0230">
    <property type="taxonomic scope" value="Bacteria"/>
</dbReference>
<dbReference type="HOGENOM" id="CLU_129938_2_0_6"/>
<dbReference type="OrthoDB" id="9804164at2"/>
<dbReference type="PhylomeDB" id="P66244"/>
<dbReference type="BioCyc" id="HINF71421:G1GJ1-1039-MONOMER"/>
<dbReference type="PRO" id="PR:P66244"/>
<dbReference type="Proteomes" id="UP000000579">
    <property type="component" value="Chromosome"/>
</dbReference>
<dbReference type="GO" id="GO:1990904">
    <property type="term" value="C:ribonucleoprotein complex"/>
    <property type="evidence" value="ECO:0007669"/>
    <property type="project" value="UniProtKB-KW"/>
</dbReference>
<dbReference type="GO" id="GO:0005840">
    <property type="term" value="C:ribosome"/>
    <property type="evidence" value="ECO:0007669"/>
    <property type="project" value="UniProtKB-KW"/>
</dbReference>
<dbReference type="GO" id="GO:0003735">
    <property type="term" value="F:structural constituent of ribosome"/>
    <property type="evidence" value="ECO:0007669"/>
    <property type="project" value="InterPro"/>
</dbReference>
<dbReference type="GO" id="GO:0006412">
    <property type="term" value="P:translation"/>
    <property type="evidence" value="ECO:0007669"/>
    <property type="project" value="UniProtKB-UniRule"/>
</dbReference>
<dbReference type="FunFam" id="1.10.287.3980:FF:000001">
    <property type="entry name" value="Mitochondrial ribosomal protein L34"/>
    <property type="match status" value="1"/>
</dbReference>
<dbReference type="Gene3D" id="1.10.287.3980">
    <property type="match status" value="1"/>
</dbReference>
<dbReference type="HAMAP" id="MF_00391">
    <property type="entry name" value="Ribosomal_bL34"/>
    <property type="match status" value="1"/>
</dbReference>
<dbReference type="InterPro" id="IPR000271">
    <property type="entry name" value="Ribosomal_bL34"/>
</dbReference>
<dbReference type="InterPro" id="IPR020939">
    <property type="entry name" value="Ribosomal_bL34_CS"/>
</dbReference>
<dbReference type="NCBIfam" id="TIGR01030">
    <property type="entry name" value="rpmH_bact"/>
    <property type="match status" value="1"/>
</dbReference>
<dbReference type="PANTHER" id="PTHR14503:SF4">
    <property type="entry name" value="LARGE RIBOSOMAL SUBUNIT PROTEIN BL34M"/>
    <property type="match status" value="1"/>
</dbReference>
<dbReference type="PANTHER" id="PTHR14503">
    <property type="entry name" value="MITOCHONDRIAL RIBOSOMAL PROTEIN 34 FAMILY MEMBER"/>
    <property type="match status" value="1"/>
</dbReference>
<dbReference type="Pfam" id="PF00468">
    <property type="entry name" value="Ribosomal_L34"/>
    <property type="match status" value="1"/>
</dbReference>
<dbReference type="PROSITE" id="PS00784">
    <property type="entry name" value="RIBOSOMAL_L34"/>
    <property type="match status" value="1"/>
</dbReference>
<protein>
    <recommendedName>
        <fullName evidence="1">Large ribosomal subunit protein bL34</fullName>
    </recommendedName>
    <alternativeName>
        <fullName>50S ribosomal protein L34</fullName>
    </alternativeName>
</protein>
<comment type="similarity">
    <text evidence="1">Belongs to the bacterial ribosomal protein bL34 family.</text>
</comment>
<feature type="chain" id="PRO_0000187390" description="Large ribosomal subunit protein bL34">
    <location>
        <begin position="1"/>
        <end position="44"/>
    </location>
</feature>
<evidence type="ECO:0000305" key="1"/>
<accession>P66244</accession>
<accession>P44370</accession>
<sequence>MKRTFQPSVLKRSRTHGFRARMATKNGRQVLARRRAKGRKSLSA</sequence>
<reference key="1">
    <citation type="journal article" date="1995" name="Science">
        <title>Whole-genome random sequencing and assembly of Haemophilus influenzae Rd.</title>
        <authorList>
            <person name="Fleischmann R.D."/>
            <person name="Adams M.D."/>
            <person name="White O."/>
            <person name="Clayton R.A."/>
            <person name="Kirkness E.F."/>
            <person name="Kerlavage A.R."/>
            <person name="Bult C.J."/>
            <person name="Tomb J.-F."/>
            <person name="Dougherty B.A."/>
            <person name="Merrick J.M."/>
            <person name="McKenney K."/>
            <person name="Sutton G.G."/>
            <person name="FitzHugh W."/>
            <person name="Fields C.A."/>
            <person name="Gocayne J.D."/>
            <person name="Scott J.D."/>
            <person name="Shirley R."/>
            <person name="Liu L.-I."/>
            <person name="Glodek A."/>
            <person name="Kelley J.M."/>
            <person name="Weidman J.F."/>
            <person name="Phillips C.A."/>
            <person name="Spriggs T."/>
            <person name="Hedblom E."/>
            <person name="Cotton M.D."/>
            <person name="Utterback T.R."/>
            <person name="Hanna M.C."/>
            <person name="Nguyen D.T."/>
            <person name="Saudek D.M."/>
            <person name="Brandon R.C."/>
            <person name="Fine L.D."/>
            <person name="Fritchman J.L."/>
            <person name="Fuhrmann J.L."/>
            <person name="Geoghagen N.S.M."/>
            <person name="Gnehm C.L."/>
            <person name="McDonald L.A."/>
            <person name="Small K.V."/>
            <person name="Fraser C.M."/>
            <person name="Smith H.O."/>
            <person name="Venter J.C."/>
        </authorList>
    </citation>
    <scope>NUCLEOTIDE SEQUENCE [LARGE SCALE GENOMIC DNA]</scope>
    <source>
        <strain>ATCC 51907 / DSM 11121 / KW20 / Rd</strain>
    </source>
</reference>
<organism>
    <name type="scientific">Haemophilus influenzae (strain ATCC 51907 / DSM 11121 / KW20 / Rd)</name>
    <dbReference type="NCBI Taxonomy" id="71421"/>
    <lineage>
        <taxon>Bacteria</taxon>
        <taxon>Pseudomonadati</taxon>
        <taxon>Pseudomonadota</taxon>
        <taxon>Gammaproteobacteria</taxon>
        <taxon>Pasteurellales</taxon>
        <taxon>Pasteurellaceae</taxon>
        <taxon>Haemophilus</taxon>
    </lineage>
</organism>
<proteinExistence type="inferred from homology"/>
<gene>
    <name type="primary">rpmH</name>
    <name type="synonym">rpl34</name>
    <name type="ordered locus">HI_0998</name>
</gene>